<keyword id="KW-0963">Cytoplasm</keyword>
<keyword id="KW-0324">Glycolysis</keyword>
<keyword id="KW-0456">Lyase</keyword>
<keyword id="KW-0460">Magnesium</keyword>
<keyword id="KW-0479">Metal-binding</keyword>
<keyword id="KW-0964">Secreted</keyword>
<organism>
    <name type="scientific">Rhodococcus erythropolis (strain PR4 / NBRC 100887)</name>
    <dbReference type="NCBI Taxonomy" id="234621"/>
    <lineage>
        <taxon>Bacteria</taxon>
        <taxon>Bacillati</taxon>
        <taxon>Actinomycetota</taxon>
        <taxon>Actinomycetes</taxon>
        <taxon>Mycobacteriales</taxon>
        <taxon>Nocardiaceae</taxon>
        <taxon>Rhodococcus</taxon>
        <taxon>Rhodococcus erythropolis group</taxon>
    </lineage>
</organism>
<gene>
    <name evidence="1" type="primary">eno</name>
    <name type="ordered locus">RER_42830</name>
</gene>
<evidence type="ECO:0000255" key="1">
    <source>
        <dbReference type="HAMAP-Rule" id="MF_00318"/>
    </source>
</evidence>
<dbReference type="EC" id="4.2.1.11" evidence="1"/>
<dbReference type="EMBL" id="AP008957">
    <property type="protein sequence ID" value="BAH34991.1"/>
    <property type="molecule type" value="Genomic_DNA"/>
</dbReference>
<dbReference type="RefSeq" id="WP_019744628.1">
    <property type="nucleotide sequence ID" value="NC_012490.1"/>
</dbReference>
<dbReference type="SMR" id="C1A306"/>
<dbReference type="GeneID" id="57485826"/>
<dbReference type="KEGG" id="rer:RER_42830"/>
<dbReference type="eggNOG" id="COG0148">
    <property type="taxonomic scope" value="Bacteria"/>
</dbReference>
<dbReference type="HOGENOM" id="CLU_031223_2_1_11"/>
<dbReference type="UniPathway" id="UPA00109">
    <property type="reaction ID" value="UER00187"/>
</dbReference>
<dbReference type="Proteomes" id="UP000002204">
    <property type="component" value="Chromosome"/>
</dbReference>
<dbReference type="GO" id="GO:0009986">
    <property type="term" value="C:cell surface"/>
    <property type="evidence" value="ECO:0007669"/>
    <property type="project" value="UniProtKB-SubCell"/>
</dbReference>
<dbReference type="GO" id="GO:0005576">
    <property type="term" value="C:extracellular region"/>
    <property type="evidence" value="ECO:0007669"/>
    <property type="project" value="UniProtKB-SubCell"/>
</dbReference>
<dbReference type="GO" id="GO:0000015">
    <property type="term" value="C:phosphopyruvate hydratase complex"/>
    <property type="evidence" value="ECO:0007669"/>
    <property type="project" value="InterPro"/>
</dbReference>
<dbReference type="GO" id="GO:0000287">
    <property type="term" value="F:magnesium ion binding"/>
    <property type="evidence" value="ECO:0007669"/>
    <property type="project" value="UniProtKB-UniRule"/>
</dbReference>
<dbReference type="GO" id="GO:0004634">
    <property type="term" value="F:phosphopyruvate hydratase activity"/>
    <property type="evidence" value="ECO:0007669"/>
    <property type="project" value="UniProtKB-UniRule"/>
</dbReference>
<dbReference type="GO" id="GO:0006096">
    <property type="term" value="P:glycolytic process"/>
    <property type="evidence" value="ECO:0007669"/>
    <property type="project" value="UniProtKB-UniRule"/>
</dbReference>
<dbReference type="CDD" id="cd03313">
    <property type="entry name" value="enolase"/>
    <property type="match status" value="1"/>
</dbReference>
<dbReference type="FunFam" id="3.20.20.120:FF:000001">
    <property type="entry name" value="Enolase"/>
    <property type="match status" value="1"/>
</dbReference>
<dbReference type="FunFam" id="3.30.390.10:FF:000001">
    <property type="entry name" value="Enolase"/>
    <property type="match status" value="1"/>
</dbReference>
<dbReference type="Gene3D" id="3.20.20.120">
    <property type="entry name" value="Enolase-like C-terminal domain"/>
    <property type="match status" value="1"/>
</dbReference>
<dbReference type="Gene3D" id="3.30.390.10">
    <property type="entry name" value="Enolase-like, N-terminal domain"/>
    <property type="match status" value="1"/>
</dbReference>
<dbReference type="HAMAP" id="MF_00318">
    <property type="entry name" value="Enolase"/>
    <property type="match status" value="1"/>
</dbReference>
<dbReference type="InterPro" id="IPR000941">
    <property type="entry name" value="Enolase"/>
</dbReference>
<dbReference type="InterPro" id="IPR036849">
    <property type="entry name" value="Enolase-like_C_sf"/>
</dbReference>
<dbReference type="InterPro" id="IPR029017">
    <property type="entry name" value="Enolase-like_N"/>
</dbReference>
<dbReference type="InterPro" id="IPR020810">
    <property type="entry name" value="Enolase_C"/>
</dbReference>
<dbReference type="InterPro" id="IPR020809">
    <property type="entry name" value="Enolase_CS"/>
</dbReference>
<dbReference type="InterPro" id="IPR020811">
    <property type="entry name" value="Enolase_N"/>
</dbReference>
<dbReference type="NCBIfam" id="TIGR01060">
    <property type="entry name" value="eno"/>
    <property type="match status" value="1"/>
</dbReference>
<dbReference type="PANTHER" id="PTHR11902">
    <property type="entry name" value="ENOLASE"/>
    <property type="match status" value="1"/>
</dbReference>
<dbReference type="PANTHER" id="PTHR11902:SF1">
    <property type="entry name" value="ENOLASE"/>
    <property type="match status" value="1"/>
</dbReference>
<dbReference type="Pfam" id="PF00113">
    <property type="entry name" value="Enolase_C"/>
    <property type="match status" value="1"/>
</dbReference>
<dbReference type="Pfam" id="PF03952">
    <property type="entry name" value="Enolase_N"/>
    <property type="match status" value="1"/>
</dbReference>
<dbReference type="PIRSF" id="PIRSF001400">
    <property type="entry name" value="Enolase"/>
    <property type="match status" value="1"/>
</dbReference>
<dbReference type="PRINTS" id="PR00148">
    <property type="entry name" value="ENOLASE"/>
</dbReference>
<dbReference type="SFLD" id="SFLDF00002">
    <property type="entry name" value="enolase"/>
    <property type="match status" value="1"/>
</dbReference>
<dbReference type="SFLD" id="SFLDG00178">
    <property type="entry name" value="enolase"/>
    <property type="match status" value="1"/>
</dbReference>
<dbReference type="SMART" id="SM01192">
    <property type="entry name" value="Enolase_C"/>
    <property type="match status" value="1"/>
</dbReference>
<dbReference type="SMART" id="SM01193">
    <property type="entry name" value="Enolase_N"/>
    <property type="match status" value="1"/>
</dbReference>
<dbReference type="SUPFAM" id="SSF51604">
    <property type="entry name" value="Enolase C-terminal domain-like"/>
    <property type="match status" value="1"/>
</dbReference>
<dbReference type="SUPFAM" id="SSF54826">
    <property type="entry name" value="Enolase N-terminal domain-like"/>
    <property type="match status" value="1"/>
</dbReference>
<dbReference type="PROSITE" id="PS00164">
    <property type="entry name" value="ENOLASE"/>
    <property type="match status" value="1"/>
</dbReference>
<reference key="1">
    <citation type="submission" date="2005-03" db="EMBL/GenBank/DDBJ databases">
        <title>Comparison of the complete genome sequences of Rhodococcus erythropolis PR4 and Rhodococcus opacus B4.</title>
        <authorList>
            <person name="Takarada H."/>
            <person name="Sekine M."/>
            <person name="Hosoyama A."/>
            <person name="Yamada R."/>
            <person name="Fujisawa T."/>
            <person name="Omata S."/>
            <person name="Shimizu A."/>
            <person name="Tsukatani N."/>
            <person name="Tanikawa S."/>
            <person name="Fujita N."/>
            <person name="Harayama S."/>
        </authorList>
    </citation>
    <scope>NUCLEOTIDE SEQUENCE [LARGE SCALE GENOMIC DNA]</scope>
    <source>
        <strain>PR4 / NBRC 100887</strain>
    </source>
</reference>
<comment type="function">
    <text evidence="1">Catalyzes the reversible conversion of 2-phosphoglycerate (2-PG) into phosphoenolpyruvate (PEP). It is essential for the degradation of carbohydrates via glycolysis.</text>
</comment>
<comment type="catalytic activity">
    <reaction evidence="1">
        <text>(2R)-2-phosphoglycerate = phosphoenolpyruvate + H2O</text>
        <dbReference type="Rhea" id="RHEA:10164"/>
        <dbReference type="ChEBI" id="CHEBI:15377"/>
        <dbReference type="ChEBI" id="CHEBI:58289"/>
        <dbReference type="ChEBI" id="CHEBI:58702"/>
        <dbReference type="EC" id="4.2.1.11"/>
    </reaction>
</comment>
<comment type="cofactor">
    <cofactor evidence="1">
        <name>Mg(2+)</name>
        <dbReference type="ChEBI" id="CHEBI:18420"/>
    </cofactor>
    <text evidence="1">Binds a second Mg(2+) ion via substrate during catalysis.</text>
</comment>
<comment type="pathway">
    <text evidence="1">Carbohydrate degradation; glycolysis; pyruvate from D-glyceraldehyde 3-phosphate: step 4/5.</text>
</comment>
<comment type="subcellular location">
    <subcellularLocation>
        <location evidence="1">Cytoplasm</location>
    </subcellularLocation>
    <subcellularLocation>
        <location evidence="1">Secreted</location>
    </subcellularLocation>
    <subcellularLocation>
        <location evidence="1">Cell surface</location>
    </subcellularLocation>
    <text evidence="1">Fractions of enolase are present in both the cytoplasm and on the cell surface.</text>
</comment>
<comment type="similarity">
    <text evidence="1">Belongs to the enolase family.</text>
</comment>
<proteinExistence type="inferred from homology"/>
<accession>C1A306</accession>
<protein>
    <recommendedName>
        <fullName evidence="1">Enolase</fullName>
        <ecNumber evidence="1">4.2.1.11</ecNumber>
    </recommendedName>
    <alternativeName>
        <fullName evidence="1">2-phospho-D-glycerate hydro-lyase</fullName>
    </alternativeName>
    <alternativeName>
        <fullName evidence="1">2-phosphoglycerate dehydratase</fullName>
    </alternativeName>
</protein>
<sequence>MASIEQVGAREILDSRGNPTVEVEVLLEDGSFARAAVPSGASTGEHEAVELRDGGARYGGKGVEKAVEAVLGEIAPAIIGIDATEQRTVDQALLDADGTPDKSRLGANALLGASLAVARAAAESSGLELFRYVGGPNAHVLPVPMMNILNGGAHADTGVDVQEFMVAPIGAPSFKESLRWGAEVYHSLKSVLKEKGLSTGLGDEGGFAPDVAGTKEALDLITIAVNKTGLKLGTDVALALDVAATEFYTDGTGYKFEGKNRTAAEMAAFYAELIDAYPLVSIEDPLDEDDWDGWVALTDQIGNKVQLVGDDLFVTNPERLEEGIVKGAANALLVKVNQIGTLTETLDAVDLAHRNGYKTMMSHRSGETEDTTIADLAVAVGSGQIKTGAPARSERVAKYNQLLRIEENLGDAARYAGEVAFPRFAFEA</sequence>
<name>ENO_RHOE4</name>
<feature type="chain" id="PRO_1000205102" description="Enolase">
    <location>
        <begin position="1"/>
        <end position="428"/>
    </location>
</feature>
<feature type="active site" description="Proton donor" evidence="1">
    <location>
        <position position="204"/>
    </location>
</feature>
<feature type="active site" description="Proton acceptor" evidence="1">
    <location>
        <position position="335"/>
    </location>
</feature>
<feature type="binding site" evidence="1">
    <location>
        <position position="162"/>
    </location>
    <ligand>
        <name>(2R)-2-phosphoglycerate</name>
        <dbReference type="ChEBI" id="CHEBI:58289"/>
    </ligand>
</feature>
<feature type="binding site" evidence="1">
    <location>
        <position position="241"/>
    </location>
    <ligand>
        <name>Mg(2+)</name>
        <dbReference type="ChEBI" id="CHEBI:18420"/>
    </ligand>
</feature>
<feature type="binding site" evidence="1">
    <location>
        <position position="283"/>
    </location>
    <ligand>
        <name>Mg(2+)</name>
        <dbReference type="ChEBI" id="CHEBI:18420"/>
    </ligand>
</feature>
<feature type="binding site" evidence="1">
    <location>
        <position position="310"/>
    </location>
    <ligand>
        <name>Mg(2+)</name>
        <dbReference type="ChEBI" id="CHEBI:18420"/>
    </ligand>
</feature>
<feature type="binding site" evidence="1">
    <location>
        <position position="335"/>
    </location>
    <ligand>
        <name>(2R)-2-phosphoglycerate</name>
        <dbReference type="ChEBI" id="CHEBI:58289"/>
    </ligand>
</feature>
<feature type="binding site" evidence="1">
    <location>
        <position position="364"/>
    </location>
    <ligand>
        <name>(2R)-2-phosphoglycerate</name>
        <dbReference type="ChEBI" id="CHEBI:58289"/>
    </ligand>
</feature>
<feature type="binding site" evidence="1">
    <location>
        <position position="365"/>
    </location>
    <ligand>
        <name>(2R)-2-phosphoglycerate</name>
        <dbReference type="ChEBI" id="CHEBI:58289"/>
    </ligand>
</feature>
<feature type="binding site" evidence="1">
    <location>
        <position position="386"/>
    </location>
    <ligand>
        <name>(2R)-2-phosphoglycerate</name>
        <dbReference type="ChEBI" id="CHEBI:58289"/>
    </ligand>
</feature>